<proteinExistence type="evidence at protein level"/>
<comment type="function">
    <text evidence="3">Catalyzes the phosphorylation of the beta-carboxyl group of aspartic acid with ATP to yield 4-phospho-L-aspartate, which is involved in the branched biosynthetic pathway leading to the biosynthesis of amino acids threonine, isoleucine and methionine.</text>
</comment>
<comment type="catalytic activity">
    <reaction evidence="3">
        <text>L-aspartate + ATP = 4-phospho-L-aspartate + ADP</text>
        <dbReference type="Rhea" id="RHEA:23776"/>
        <dbReference type="ChEBI" id="CHEBI:29991"/>
        <dbReference type="ChEBI" id="CHEBI:30616"/>
        <dbReference type="ChEBI" id="CHEBI:57535"/>
        <dbReference type="ChEBI" id="CHEBI:456216"/>
        <dbReference type="EC" id="2.7.2.4"/>
    </reaction>
</comment>
<comment type="activity regulation">
    <text evidence="3 4">Lysine-sensitive. Regulated by degradation in response to starvation of cells for various nutrients. Ammonium starvation induced the fastest aspartokinase II decline, followed by amino acid starvation and glucose limitation.</text>
</comment>
<comment type="biophysicochemical properties">
    <kinetics>
        <KM evidence="3">6.5 mM for ATP</KM>
        <KM evidence="3">10 mM for aspartate</KM>
        <text>kcat is 952 min(-1).</text>
    </kinetics>
</comment>
<comment type="pathway">
    <text>Amino-acid biosynthesis; L-lysine biosynthesis via DAP pathway; (S)-tetrahydrodipicolinate from L-aspartate: step 1/4.</text>
</comment>
<comment type="pathway">
    <text>Amino-acid biosynthesis; L-methionine biosynthesis via de novo pathway; L-homoserine from L-aspartate: step 1/3.</text>
</comment>
<comment type="pathway">
    <text>Amino-acid biosynthesis; L-threonine biosynthesis; L-threonine from L-aspartate: step 1/5.</text>
</comment>
<comment type="subunit">
    <text evidence="3">Tetramer consisting of 2 isoforms Alpha (catalytic and regulation) and of a homodimer of 2 isoforms Beta (regulation).</text>
</comment>
<comment type="alternative products">
    <event type="alternative initiation"/>
    <isoform>
        <id>P08495-1</id>
        <name>Alpha</name>
        <name>Aspartokinase 2 subunit alpha</name>
        <sequence type="displayed"/>
    </isoform>
    <isoform>
        <id>P08495-2</id>
        <name>Beta</name>
        <name>Aspartokinase 2 subunit beta</name>
        <sequence type="described" ref="VSP_018655"/>
    </isoform>
</comment>
<comment type="similarity">
    <text evidence="5">Belongs to the aspartokinase family.</text>
</comment>
<accession>P08495</accession>
<accession>P08496</accession>
<accession>P94554</accession>
<accession>P97183</accession>
<gene>
    <name type="primary">lysC</name>
    <name type="ordered locus">BSU28470</name>
</gene>
<dbReference type="EC" id="2.7.2.4"/>
<dbReference type="EMBL" id="J03294">
    <property type="protein sequence ID" value="AAA87318.1"/>
    <property type="molecule type" value="Genomic_DNA"/>
</dbReference>
<dbReference type="EMBL" id="J03294">
    <property type="protein sequence ID" value="AAA87319.1"/>
    <property type="molecule type" value="Genomic_DNA"/>
</dbReference>
<dbReference type="EMBL" id="Z75208">
    <property type="protein sequence ID" value="CAA99580.1"/>
    <property type="molecule type" value="Genomic_DNA"/>
</dbReference>
<dbReference type="EMBL" id="Z75208">
    <property type="protein sequence ID" value="CAA99581.1"/>
    <property type="molecule type" value="Genomic_DNA"/>
</dbReference>
<dbReference type="EMBL" id="AL009126">
    <property type="protein sequence ID" value="CAB14807.1"/>
    <property type="molecule type" value="Genomic_DNA"/>
</dbReference>
<dbReference type="PIR" id="A29314">
    <property type="entry name" value="A29314"/>
</dbReference>
<dbReference type="RefSeq" id="NP_390725.1">
    <molecule id="P08495-1"/>
    <property type="nucleotide sequence ID" value="NC_000964.3"/>
</dbReference>
<dbReference type="RefSeq" id="WP_003229564.1">
    <property type="nucleotide sequence ID" value="NZ_OZ025638.1"/>
</dbReference>
<dbReference type="RefSeq" id="WP_119123074.1">
    <molecule id="P08495-2"/>
    <property type="nucleotide sequence ID" value="NC_000964.3"/>
</dbReference>
<dbReference type="SMR" id="P08495"/>
<dbReference type="FunCoup" id="P08495">
    <property type="interactions" value="602"/>
</dbReference>
<dbReference type="IntAct" id="P08495">
    <property type="interactions" value="1"/>
</dbReference>
<dbReference type="MINT" id="P08495"/>
<dbReference type="STRING" id="224308.BSU28470"/>
<dbReference type="PaxDb" id="224308-BSU28470"/>
<dbReference type="EnsemblBacteria" id="CAB14807">
    <property type="protein sequence ID" value="CAB14807"/>
    <property type="gene ID" value="BSU_28470"/>
</dbReference>
<dbReference type="GeneID" id="937451"/>
<dbReference type="KEGG" id="bsu:BSU28470"/>
<dbReference type="PATRIC" id="fig|224308.179.peg.3093"/>
<dbReference type="eggNOG" id="COG0527">
    <property type="taxonomic scope" value="Bacteria"/>
</dbReference>
<dbReference type="InParanoid" id="P08495"/>
<dbReference type="OrthoDB" id="9799110at2"/>
<dbReference type="PhylomeDB" id="P08495"/>
<dbReference type="BioCyc" id="BSUB:BSU28470-MONOMER"/>
<dbReference type="BioCyc" id="MetaCyc:MONOMER-6561"/>
<dbReference type="BioCyc" id="MetaCyc:MONOMER-6562"/>
<dbReference type="BRENDA" id="2.7.2.4">
    <property type="organism ID" value="658"/>
</dbReference>
<dbReference type="UniPathway" id="UPA00034">
    <property type="reaction ID" value="UER00015"/>
</dbReference>
<dbReference type="UniPathway" id="UPA00050">
    <property type="reaction ID" value="UER00461"/>
</dbReference>
<dbReference type="UniPathway" id="UPA00051">
    <property type="reaction ID" value="UER00462"/>
</dbReference>
<dbReference type="Proteomes" id="UP000001570">
    <property type="component" value="Chromosome"/>
</dbReference>
<dbReference type="GO" id="GO:0005829">
    <property type="term" value="C:cytosol"/>
    <property type="evidence" value="ECO:0000318"/>
    <property type="project" value="GO_Central"/>
</dbReference>
<dbReference type="GO" id="GO:0004072">
    <property type="term" value="F:aspartate kinase activity"/>
    <property type="evidence" value="ECO:0000318"/>
    <property type="project" value="GO_Central"/>
</dbReference>
<dbReference type="GO" id="GO:0005524">
    <property type="term" value="F:ATP binding"/>
    <property type="evidence" value="ECO:0007669"/>
    <property type="project" value="UniProtKB-KW"/>
</dbReference>
<dbReference type="GO" id="GO:0019877">
    <property type="term" value="P:diaminopimelate biosynthetic process"/>
    <property type="evidence" value="ECO:0007669"/>
    <property type="project" value="UniProtKB-KW"/>
</dbReference>
<dbReference type="GO" id="GO:0009090">
    <property type="term" value="P:homoserine biosynthetic process"/>
    <property type="evidence" value="ECO:0000318"/>
    <property type="project" value="GO_Central"/>
</dbReference>
<dbReference type="GO" id="GO:0009089">
    <property type="term" value="P:lysine biosynthetic process via diaminopimelate"/>
    <property type="evidence" value="ECO:0000318"/>
    <property type="project" value="GO_Central"/>
</dbReference>
<dbReference type="GO" id="GO:0009088">
    <property type="term" value="P:threonine biosynthetic process"/>
    <property type="evidence" value="ECO:0007669"/>
    <property type="project" value="UniProtKB-UniPathway"/>
</dbReference>
<dbReference type="CDD" id="cd04261">
    <property type="entry name" value="AAK_AKii-LysC-BS"/>
    <property type="match status" value="1"/>
</dbReference>
<dbReference type="CDD" id="cd04923">
    <property type="entry name" value="ACT_AK-LysC-DapG-like_2"/>
    <property type="match status" value="1"/>
</dbReference>
<dbReference type="CDD" id="cd04913">
    <property type="entry name" value="ACT_AKii-LysC-BS-like_1"/>
    <property type="match status" value="1"/>
</dbReference>
<dbReference type="FunFam" id="3.40.1160.10:FF:000002">
    <property type="entry name" value="Aspartokinase"/>
    <property type="match status" value="1"/>
</dbReference>
<dbReference type="FunFam" id="3.30.2130.10:FF:000001">
    <property type="entry name" value="Bifunctional aspartokinase/homoserine dehydrogenase"/>
    <property type="match status" value="1"/>
</dbReference>
<dbReference type="Gene3D" id="3.40.1160.10">
    <property type="entry name" value="Acetylglutamate kinase-like"/>
    <property type="match status" value="1"/>
</dbReference>
<dbReference type="Gene3D" id="3.30.2130.10">
    <property type="entry name" value="VC0802-like"/>
    <property type="match status" value="1"/>
</dbReference>
<dbReference type="InterPro" id="IPR036393">
    <property type="entry name" value="AceGlu_kinase-like_sf"/>
</dbReference>
<dbReference type="InterPro" id="IPR045865">
    <property type="entry name" value="ACT-like_dom_sf"/>
</dbReference>
<dbReference type="InterPro" id="IPR054352">
    <property type="entry name" value="ACT_Aspartokinase"/>
</dbReference>
<dbReference type="InterPro" id="IPR002912">
    <property type="entry name" value="ACT_dom"/>
</dbReference>
<dbReference type="InterPro" id="IPR041740">
    <property type="entry name" value="AKii-LysC-BS"/>
</dbReference>
<dbReference type="InterPro" id="IPR001048">
    <property type="entry name" value="Asp/Glu/Uridylate_kinase"/>
</dbReference>
<dbReference type="InterPro" id="IPR005260">
    <property type="entry name" value="Asp_kin_monofn"/>
</dbReference>
<dbReference type="InterPro" id="IPR001341">
    <property type="entry name" value="Asp_kinase"/>
</dbReference>
<dbReference type="InterPro" id="IPR018042">
    <property type="entry name" value="Aspartate_kinase_CS"/>
</dbReference>
<dbReference type="NCBIfam" id="TIGR00656">
    <property type="entry name" value="asp_kin_monofn"/>
    <property type="match status" value="1"/>
</dbReference>
<dbReference type="NCBIfam" id="TIGR00657">
    <property type="entry name" value="asp_kinases"/>
    <property type="match status" value="1"/>
</dbReference>
<dbReference type="NCBIfam" id="NF005154">
    <property type="entry name" value="PRK06635.1-2"/>
    <property type="match status" value="1"/>
</dbReference>
<dbReference type="NCBIfam" id="NF005155">
    <property type="entry name" value="PRK06635.1-4"/>
    <property type="match status" value="1"/>
</dbReference>
<dbReference type="NCBIfam" id="NF005156">
    <property type="entry name" value="PRK06635.1-5"/>
    <property type="match status" value="1"/>
</dbReference>
<dbReference type="PANTHER" id="PTHR21499">
    <property type="entry name" value="ASPARTATE KINASE"/>
    <property type="match status" value="1"/>
</dbReference>
<dbReference type="PANTHER" id="PTHR21499:SF68">
    <property type="entry name" value="ASPARTOKINASE 2"/>
    <property type="match status" value="1"/>
</dbReference>
<dbReference type="Pfam" id="PF00696">
    <property type="entry name" value="AA_kinase"/>
    <property type="match status" value="1"/>
</dbReference>
<dbReference type="Pfam" id="PF01842">
    <property type="entry name" value="ACT"/>
    <property type="match status" value="1"/>
</dbReference>
<dbReference type="Pfam" id="PF22468">
    <property type="entry name" value="ACT_9"/>
    <property type="match status" value="1"/>
</dbReference>
<dbReference type="PIRSF" id="PIRSF000726">
    <property type="entry name" value="Asp_kin"/>
    <property type="match status" value="1"/>
</dbReference>
<dbReference type="SUPFAM" id="SSF55021">
    <property type="entry name" value="ACT-like"/>
    <property type="match status" value="2"/>
</dbReference>
<dbReference type="SUPFAM" id="SSF53633">
    <property type="entry name" value="Carbamate kinase-like"/>
    <property type="match status" value="1"/>
</dbReference>
<dbReference type="PROSITE" id="PS51671">
    <property type="entry name" value="ACT"/>
    <property type="match status" value="2"/>
</dbReference>
<dbReference type="PROSITE" id="PS00324">
    <property type="entry name" value="ASPARTOKINASE"/>
    <property type="match status" value="1"/>
</dbReference>
<protein>
    <recommendedName>
        <fullName>Aspartokinase 2</fullName>
        <ecNumber>2.7.2.4</ecNumber>
    </recommendedName>
    <alternativeName>
        <fullName>Aspartate kinase 2</fullName>
    </alternativeName>
    <alternativeName>
        <fullName>Aspartokinase II</fullName>
    </alternativeName>
</protein>
<reference key="1">
    <citation type="journal article" date="1987" name="J. Biol. Chem.">
        <title>Nucleotide sequence of the overlapping genes for the subunits of Bacillus subtilis aspartokinase II and their control regions.</title>
        <authorList>
            <person name="Chen N.-Y."/>
            <person name="Hu F.M."/>
            <person name="Paulus H."/>
        </authorList>
    </citation>
    <scope>NUCLEOTIDE SEQUENCE [GENOMIC DNA]</scope>
</reference>
<reference key="2">
    <citation type="journal article" date="1996" name="Microbiology">
        <title>The dnaB-pheA (256 degrees-240 degrees) region of the Bacillus subtilis chromosome containing genes responsible for stress responses, the utilization of plant cell walls and primary metabolism.</title>
        <authorList>
            <person name="Wipat A."/>
            <person name="Carter N."/>
            <person name="Brignell C.S."/>
            <person name="Guy J.B."/>
            <person name="Piper K."/>
            <person name="Sanders J."/>
            <person name="Emmerson P.T."/>
            <person name="Harwood C.R."/>
        </authorList>
    </citation>
    <scope>NUCLEOTIDE SEQUENCE [GENOMIC DNA]</scope>
    <source>
        <strain>168</strain>
    </source>
</reference>
<reference key="3">
    <citation type="journal article" date="1997" name="Nature">
        <title>The complete genome sequence of the Gram-positive bacterium Bacillus subtilis.</title>
        <authorList>
            <person name="Kunst F."/>
            <person name="Ogasawara N."/>
            <person name="Moszer I."/>
            <person name="Albertini A.M."/>
            <person name="Alloni G."/>
            <person name="Azevedo V."/>
            <person name="Bertero M.G."/>
            <person name="Bessieres P."/>
            <person name="Bolotin A."/>
            <person name="Borchert S."/>
            <person name="Borriss R."/>
            <person name="Boursier L."/>
            <person name="Brans A."/>
            <person name="Braun M."/>
            <person name="Brignell S.C."/>
            <person name="Bron S."/>
            <person name="Brouillet S."/>
            <person name="Bruschi C.V."/>
            <person name="Caldwell B."/>
            <person name="Capuano V."/>
            <person name="Carter N.M."/>
            <person name="Choi S.-K."/>
            <person name="Codani J.-J."/>
            <person name="Connerton I.F."/>
            <person name="Cummings N.J."/>
            <person name="Daniel R.A."/>
            <person name="Denizot F."/>
            <person name="Devine K.M."/>
            <person name="Duesterhoeft A."/>
            <person name="Ehrlich S.D."/>
            <person name="Emmerson P.T."/>
            <person name="Entian K.-D."/>
            <person name="Errington J."/>
            <person name="Fabret C."/>
            <person name="Ferrari E."/>
            <person name="Foulger D."/>
            <person name="Fritz C."/>
            <person name="Fujita M."/>
            <person name="Fujita Y."/>
            <person name="Fuma S."/>
            <person name="Galizzi A."/>
            <person name="Galleron N."/>
            <person name="Ghim S.-Y."/>
            <person name="Glaser P."/>
            <person name="Goffeau A."/>
            <person name="Golightly E.J."/>
            <person name="Grandi G."/>
            <person name="Guiseppi G."/>
            <person name="Guy B.J."/>
            <person name="Haga K."/>
            <person name="Haiech J."/>
            <person name="Harwood C.R."/>
            <person name="Henaut A."/>
            <person name="Hilbert H."/>
            <person name="Holsappel S."/>
            <person name="Hosono S."/>
            <person name="Hullo M.-F."/>
            <person name="Itaya M."/>
            <person name="Jones L.-M."/>
            <person name="Joris B."/>
            <person name="Karamata D."/>
            <person name="Kasahara Y."/>
            <person name="Klaerr-Blanchard M."/>
            <person name="Klein C."/>
            <person name="Kobayashi Y."/>
            <person name="Koetter P."/>
            <person name="Koningstein G."/>
            <person name="Krogh S."/>
            <person name="Kumano M."/>
            <person name="Kurita K."/>
            <person name="Lapidus A."/>
            <person name="Lardinois S."/>
            <person name="Lauber J."/>
            <person name="Lazarevic V."/>
            <person name="Lee S.-M."/>
            <person name="Levine A."/>
            <person name="Liu H."/>
            <person name="Masuda S."/>
            <person name="Mauel C."/>
            <person name="Medigue C."/>
            <person name="Medina N."/>
            <person name="Mellado R.P."/>
            <person name="Mizuno M."/>
            <person name="Moestl D."/>
            <person name="Nakai S."/>
            <person name="Noback M."/>
            <person name="Noone D."/>
            <person name="O'Reilly M."/>
            <person name="Ogawa K."/>
            <person name="Ogiwara A."/>
            <person name="Oudega B."/>
            <person name="Park S.-H."/>
            <person name="Parro V."/>
            <person name="Pohl T.M."/>
            <person name="Portetelle D."/>
            <person name="Porwollik S."/>
            <person name="Prescott A.M."/>
            <person name="Presecan E."/>
            <person name="Pujic P."/>
            <person name="Purnelle B."/>
            <person name="Rapoport G."/>
            <person name="Rey M."/>
            <person name="Reynolds S."/>
            <person name="Rieger M."/>
            <person name="Rivolta C."/>
            <person name="Rocha E."/>
            <person name="Roche B."/>
            <person name="Rose M."/>
            <person name="Sadaie Y."/>
            <person name="Sato T."/>
            <person name="Scanlan E."/>
            <person name="Schleich S."/>
            <person name="Schroeter R."/>
            <person name="Scoffone F."/>
            <person name="Sekiguchi J."/>
            <person name="Sekowska A."/>
            <person name="Seror S.J."/>
            <person name="Serror P."/>
            <person name="Shin B.-S."/>
            <person name="Soldo B."/>
            <person name="Sorokin A."/>
            <person name="Tacconi E."/>
            <person name="Takagi T."/>
            <person name="Takahashi H."/>
            <person name="Takemaru K."/>
            <person name="Takeuchi M."/>
            <person name="Tamakoshi A."/>
            <person name="Tanaka T."/>
            <person name="Terpstra P."/>
            <person name="Tognoni A."/>
            <person name="Tosato V."/>
            <person name="Uchiyama S."/>
            <person name="Vandenbol M."/>
            <person name="Vannier F."/>
            <person name="Vassarotti A."/>
            <person name="Viari A."/>
            <person name="Wambutt R."/>
            <person name="Wedler E."/>
            <person name="Wedler H."/>
            <person name="Weitzenegger T."/>
            <person name="Winters P."/>
            <person name="Wipat A."/>
            <person name="Yamamoto H."/>
            <person name="Yamane K."/>
            <person name="Yasumoto K."/>
            <person name="Yata K."/>
            <person name="Yoshida K."/>
            <person name="Yoshikawa H.-F."/>
            <person name="Zumstein E."/>
            <person name="Yoshikawa H."/>
            <person name="Danchin A."/>
        </authorList>
    </citation>
    <scope>NUCLEOTIDE SEQUENCE [LARGE SCALE GENOMIC DNA]</scope>
    <source>
        <strain>168</strain>
    </source>
</reference>
<reference key="4">
    <citation type="journal article" date="1988" name="J. Biol. Chem.">
        <title>Mechanism of expression of the overlapping genes of Bacillus subtilis aspartokinase II.</title>
        <authorList>
            <person name="Chen N.-Y."/>
            <person name="Paulus H."/>
        </authorList>
    </citation>
    <scope>ALTERNATIVE INITIATION</scope>
</reference>
<reference key="5">
    <citation type="journal article" date="1990" name="J. Biol. Chem.">
        <title>Aspartokinase II from Bacillus subtilis is degraded in response to nutrient limitation.</title>
        <authorList>
            <person name="Graves L.M."/>
            <person name="Switzer R.L."/>
        </authorList>
    </citation>
    <scope>ACTIVITY REGULATION</scope>
</reference>
<reference key="6">
    <citation type="journal article" date="2004" name="Biochem. Biophys. Res. Commun.">
        <title>Conversion of feedback regulation in aspartate kinase by domain exchange.</title>
        <authorList>
            <person name="Kato C."/>
            <person name="Kurihara T."/>
            <person name="Kobashi N."/>
            <person name="Yamane H."/>
            <person name="Nishiyama M."/>
        </authorList>
    </citation>
    <scope>FUNCTION</scope>
    <scope>CATALYTIC ACTIVITY</scope>
    <scope>BIOPHYSICOCHEMICAL PROPERTIES</scope>
    <scope>ACTIVITY REGULATION</scope>
    <scope>SUBUNIT</scope>
</reference>
<name>AK2_BACSU</name>
<feature type="chain" id="PRO_0000002373" description="Aspartokinase 2">
    <location>
        <begin position="1"/>
        <end position="408"/>
    </location>
</feature>
<feature type="domain" description="ACT 1" evidence="2">
    <location>
        <begin position="264"/>
        <end position="337"/>
    </location>
</feature>
<feature type="domain" description="ACT 2" evidence="2">
    <location>
        <begin position="343"/>
        <end position="408"/>
    </location>
</feature>
<feature type="binding site" evidence="1">
    <location>
        <begin position="7"/>
        <end position="10"/>
    </location>
    <ligand>
        <name>ATP</name>
        <dbReference type="ChEBI" id="CHEBI:30616"/>
    </ligand>
</feature>
<feature type="binding site" evidence="1">
    <location>
        <begin position="25"/>
        <end position="30"/>
    </location>
    <ligand>
        <name>substrate</name>
    </ligand>
</feature>
<feature type="binding site" evidence="1">
    <location>
        <position position="41"/>
    </location>
    <ligand>
        <name>ATP</name>
        <dbReference type="ChEBI" id="CHEBI:30616"/>
    </ligand>
</feature>
<feature type="binding site" evidence="1">
    <location>
        <begin position="47"/>
        <end position="49"/>
    </location>
    <ligand>
        <name>substrate</name>
    </ligand>
</feature>
<feature type="binding site" evidence="1">
    <location>
        <position position="74"/>
    </location>
    <ligand>
        <name>substrate</name>
    </ligand>
</feature>
<feature type="binding site" evidence="1">
    <location>
        <begin position="125"/>
        <end position="126"/>
    </location>
    <ligand>
        <name>substrate</name>
    </ligand>
</feature>
<feature type="binding site" evidence="1">
    <location>
        <begin position="150"/>
        <end position="153"/>
    </location>
    <ligand>
        <name>substrate</name>
    </ligand>
</feature>
<feature type="binding site" evidence="1">
    <location>
        <position position="153"/>
    </location>
    <ligand>
        <name>substrate</name>
    </ligand>
</feature>
<feature type="binding site" evidence="1">
    <location>
        <begin position="173"/>
        <end position="174"/>
    </location>
    <ligand>
        <name>ATP</name>
        <dbReference type="ChEBI" id="CHEBI:30616"/>
    </ligand>
</feature>
<feature type="binding site" evidence="1">
    <location>
        <begin position="179"/>
        <end position="184"/>
    </location>
    <ligand>
        <name>ATP</name>
        <dbReference type="ChEBI" id="CHEBI:30616"/>
    </ligand>
</feature>
<feature type="binding site" evidence="1">
    <location>
        <begin position="289"/>
        <end position="291"/>
    </location>
    <ligand>
        <name>substrate</name>
    </ligand>
</feature>
<feature type="binding site" evidence="1">
    <location>
        <position position="295"/>
    </location>
    <ligand>
        <name>substrate</name>
    </ligand>
</feature>
<feature type="binding site" evidence="1">
    <location>
        <begin position="354"/>
        <end position="355"/>
    </location>
    <ligand>
        <name>substrate</name>
    </ligand>
</feature>
<feature type="binding site" evidence="1">
    <location>
        <begin position="368"/>
        <end position="369"/>
    </location>
    <ligand>
        <name>substrate</name>
    </ligand>
</feature>
<feature type="binding site" evidence="1">
    <location>
        <begin position="375"/>
        <end position="376"/>
    </location>
    <ligand>
        <name>substrate</name>
    </ligand>
</feature>
<feature type="site" description="Contribution to the catalysis" evidence="1">
    <location>
        <position position="7"/>
    </location>
</feature>
<feature type="site" description="Contribution to the catalysis" evidence="1">
    <location>
        <position position="74"/>
    </location>
</feature>
<feature type="splice variant" id="VSP_018655" description="In isoform Beta." evidence="5">
    <location>
        <begin position="1"/>
        <end position="245"/>
    </location>
</feature>
<feature type="sequence conflict" description="In Ref. 1; AAA87318." evidence="5" ref="1">
    <original>A</original>
    <variation>V</variation>
    <location>
        <position position="166"/>
    </location>
</feature>
<keyword id="KW-0024">Alternative initiation</keyword>
<keyword id="KW-0028">Amino-acid biosynthesis</keyword>
<keyword id="KW-0067">ATP-binding</keyword>
<keyword id="KW-0220">Diaminopimelate biosynthesis</keyword>
<keyword id="KW-0418">Kinase</keyword>
<keyword id="KW-0457">Lysine biosynthesis</keyword>
<keyword id="KW-0547">Nucleotide-binding</keyword>
<keyword id="KW-1185">Reference proteome</keyword>
<keyword id="KW-0677">Repeat</keyword>
<keyword id="KW-0808">Transferase</keyword>
<evidence type="ECO:0000250" key="1"/>
<evidence type="ECO:0000255" key="2">
    <source>
        <dbReference type="PROSITE-ProRule" id="PRU01007"/>
    </source>
</evidence>
<evidence type="ECO:0000269" key="3">
    <source>
    </source>
</evidence>
<evidence type="ECO:0000269" key="4">
    <source>
    </source>
</evidence>
<evidence type="ECO:0000305" key="5"/>
<sequence length="408" mass="43808">MGLIVQKFGGTSVGSVEKIQNAANRAIAEKQKGHQVVVVVSAMGKSTDELVSLAKAISDQPSKREMDMLLATGEQVTISLLSMALQEKGYDAVSYTGWQAGIRTEAIHGNARITDIDTSVLADQLEKGKIVIVAGFQGMTEDCEITTLGRGGSDTTAVALAAALKADKCDIYTDVPGVFTTDPRYVKSARKLEGISYDEMLELANLGAGVLHPRAVEFAKNYQVPLEVRSSTETEAGTLIEEESSMEQNLIVRGIAFEDQITRVTIYGLTSGLTTLSTIFTTLAKRNINVDIIIQTQAEDKTGISFSVKTEDADQTVAVLEEYKDALEFEKIETESKLAKVSIVGSGMVSNPGVAAEMFAVLAQKNILIKMVSTSEIKVSTVVSENDMVKAVESLHDAFELSKHPSAV</sequence>
<organism>
    <name type="scientific">Bacillus subtilis (strain 168)</name>
    <dbReference type="NCBI Taxonomy" id="224308"/>
    <lineage>
        <taxon>Bacteria</taxon>
        <taxon>Bacillati</taxon>
        <taxon>Bacillota</taxon>
        <taxon>Bacilli</taxon>
        <taxon>Bacillales</taxon>
        <taxon>Bacillaceae</taxon>
        <taxon>Bacillus</taxon>
    </lineage>
</organism>